<gene>
    <name evidence="3" type="primary">iliE</name>
    <name type="ORF">TRIREDRAFT_76204</name>
</gene>
<proteinExistence type="inferred from homology"/>
<protein>
    <recommendedName>
        <fullName evidence="3">NADH-dependent flavin oxidoreductase iliE</fullName>
        <ecNumber evidence="2">1.-.-.-</ecNumber>
    </recommendedName>
    <alternativeName>
        <fullName evidence="3">Epimerase iliE</fullName>
    </alternativeName>
    <alternativeName>
        <fullName evidence="3">Ilicicolin H biosynthesis cluster protein E</fullName>
    </alternativeName>
</protein>
<name>ILIE_HYPJQ</name>
<organism>
    <name type="scientific">Hypocrea jecorina (strain QM6a)</name>
    <name type="common">Trichoderma reesei</name>
    <dbReference type="NCBI Taxonomy" id="431241"/>
    <lineage>
        <taxon>Eukaryota</taxon>
        <taxon>Fungi</taxon>
        <taxon>Dikarya</taxon>
        <taxon>Ascomycota</taxon>
        <taxon>Pezizomycotina</taxon>
        <taxon>Sordariomycetes</taxon>
        <taxon>Hypocreomycetidae</taxon>
        <taxon>Hypocreales</taxon>
        <taxon>Hypocreaceae</taxon>
        <taxon>Trichoderma</taxon>
    </lineage>
</organism>
<feature type="chain" id="PRO_0000455715" description="NADH-dependent flavin oxidoreductase iliE">
    <location>
        <begin position="1"/>
        <end position="401"/>
    </location>
</feature>
<feature type="binding site" evidence="1">
    <location>
        <begin position="25"/>
        <end position="28"/>
    </location>
    <ligand>
        <name>FMN</name>
        <dbReference type="ChEBI" id="CHEBI:58210"/>
    </ligand>
</feature>
<feature type="binding site" evidence="1">
    <location>
        <position position="107"/>
    </location>
    <ligand>
        <name>FMN</name>
        <dbReference type="ChEBI" id="CHEBI:58210"/>
    </ligand>
</feature>
<feature type="binding site" evidence="1">
    <location>
        <begin position="188"/>
        <end position="191"/>
    </location>
    <ligand>
        <name>substrate</name>
    </ligand>
</feature>
<feature type="binding site" evidence="1">
    <location>
        <begin position="346"/>
        <end position="347"/>
    </location>
    <ligand>
        <name>FMN</name>
        <dbReference type="ChEBI" id="CHEBI:58210"/>
    </ligand>
</feature>
<accession>G0REX8</accession>
<keyword id="KW-0285">Flavoprotein</keyword>
<keyword id="KW-0288">FMN</keyword>
<keyword id="KW-0521">NADP</keyword>
<keyword id="KW-0560">Oxidoreductase</keyword>
<keyword id="KW-1185">Reference proteome</keyword>
<evidence type="ECO:0000250" key="1">
    <source>
        <dbReference type="UniProtKB" id="P54550"/>
    </source>
</evidence>
<evidence type="ECO:0000269" key="2">
    <source>
    </source>
</evidence>
<evidence type="ECO:0000303" key="3">
    <source>
    </source>
</evidence>
<evidence type="ECO:0000305" key="4"/>
<evidence type="ECO:0000305" key="5">
    <source>
    </source>
</evidence>
<reference key="1">
    <citation type="journal article" date="2008" name="Nat. Biotechnol.">
        <title>Genome sequencing and analysis of the biomass-degrading fungus Trichoderma reesei (syn. Hypocrea jecorina).</title>
        <authorList>
            <person name="Martinez D."/>
            <person name="Berka R.M."/>
            <person name="Henrissat B."/>
            <person name="Saloheimo M."/>
            <person name="Arvas M."/>
            <person name="Baker S.E."/>
            <person name="Chapman J."/>
            <person name="Chertkov O."/>
            <person name="Coutinho P.M."/>
            <person name="Cullen D."/>
            <person name="Danchin E.G."/>
            <person name="Grigoriev I.V."/>
            <person name="Harris P."/>
            <person name="Jackson M."/>
            <person name="Kubicek C.P."/>
            <person name="Han C.S."/>
            <person name="Ho I."/>
            <person name="Larrondo L.F."/>
            <person name="de Leon A.L."/>
            <person name="Magnuson J.K."/>
            <person name="Merino S."/>
            <person name="Misra M."/>
            <person name="Nelson B."/>
            <person name="Putnam N."/>
            <person name="Robbertse B."/>
            <person name="Salamov A.A."/>
            <person name="Schmoll M."/>
            <person name="Terry A."/>
            <person name="Thayer N."/>
            <person name="Westerholm-Parvinen A."/>
            <person name="Schoch C.L."/>
            <person name="Yao J."/>
            <person name="Barabote R."/>
            <person name="Nelson M.A."/>
            <person name="Detter C."/>
            <person name="Bruce D."/>
            <person name="Kuske C.R."/>
            <person name="Xie G."/>
            <person name="Richardson P."/>
            <person name="Rokhsar D.S."/>
            <person name="Lucas S.M."/>
            <person name="Rubin E.M."/>
            <person name="Dunn-Coleman N."/>
            <person name="Ward M."/>
            <person name="Brettin T.S."/>
        </authorList>
    </citation>
    <scope>NUCLEOTIDE SEQUENCE [LARGE SCALE GENOMIC DNA]</scope>
    <source>
        <strain>QM6a</strain>
    </source>
</reference>
<reference key="2">
    <citation type="journal article" date="2021" name="J. Fungi">
        <title>Trichoderma reesei Contains a Biosynthetic Gene Cluster That Encodes the Antifungal Agent Ilicicolin H.</title>
        <authorList>
            <person name="Shenouda M.L."/>
            <person name="Ambilika M."/>
            <person name="Cox R.J."/>
        </authorList>
    </citation>
    <scope>FUNCTION</scope>
</reference>
<dbReference type="EC" id="1.-.-.-" evidence="2"/>
<dbReference type="EMBL" id="GL985060">
    <property type="protein sequence ID" value="EGR50287.1"/>
    <property type="molecule type" value="Genomic_DNA"/>
</dbReference>
<dbReference type="RefSeq" id="XP_006963789.1">
    <property type="nucleotide sequence ID" value="XM_006963727.1"/>
</dbReference>
<dbReference type="SMR" id="G0REX8"/>
<dbReference type="EnsemblFungi" id="EGR50287">
    <property type="protein sequence ID" value="EGR50287"/>
    <property type="gene ID" value="TRIREDRAFT_76204"/>
</dbReference>
<dbReference type="GeneID" id="18488589"/>
<dbReference type="KEGG" id="tre:TRIREDRAFT_76204"/>
<dbReference type="VEuPathDB" id="FungiDB:TRIREDRAFT_76204"/>
<dbReference type="eggNOG" id="KOG0134">
    <property type="taxonomic scope" value="Eukaryota"/>
</dbReference>
<dbReference type="HOGENOM" id="CLU_012153_6_2_1"/>
<dbReference type="OrthoDB" id="1663137at2759"/>
<dbReference type="Proteomes" id="UP000008984">
    <property type="component" value="Unassembled WGS sequence"/>
</dbReference>
<dbReference type="GO" id="GO:0010181">
    <property type="term" value="F:FMN binding"/>
    <property type="evidence" value="ECO:0007669"/>
    <property type="project" value="InterPro"/>
</dbReference>
<dbReference type="GO" id="GO:0016491">
    <property type="term" value="F:oxidoreductase activity"/>
    <property type="evidence" value="ECO:0007669"/>
    <property type="project" value="UniProtKB-KW"/>
</dbReference>
<dbReference type="Gene3D" id="3.20.20.70">
    <property type="entry name" value="Aldolase class I"/>
    <property type="match status" value="1"/>
</dbReference>
<dbReference type="InterPro" id="IPR013785">
    <property type="entry name" value="Aldolase_TIM"/>
</dbReference>
<dbReference type="InterPro" id="IPR051799">
    <property type="entry name" value="NADH_flavin_oxidoreductase"/>
</dbReference>
<dbReference type="InterPro" id="IPR001155">
    <property type="entry name" value="OxRdtase_FMN_N"/>
</dbReference>
<dbReference type="PANTHER" id="PTHR43656">
    <property type="entry name" value="BINDING OXIDOREDUCTASE, PUTATIVE (AFU_ORTHOLOGUE AFUA_2G08260)-RELATED"/>
    <property type="match status" value="1"/>
</dbReference>
<dbReference type="PANTHER" id="PTHR43656:SF2">
    <property type="entry name" value="BINDING OXIDOREDUCTASE, PUTATIVE (AFU_ORTHOLOGUE AFUA_2G08260)-RELATED"/>
    <property type="match status" value="1"/>
</dbReference>
<dbReference type="Pfam" id="PF00724">
    <property type="entry name" value="Oxidored_FMN"/>
    <property type="match status" value="1"/>
</dbReference>
<dbReference type="SUPFAM" id="SSF51395">
    <property type="entry name" value="FMN-linked oxidoreductases"/>
    <property type="match status" value="1"/>
</dbReference>
<comment type="function">
    <text evidence="2 5">NADH-dependent flavin oxidoreductase; part of the gene cluster that mediates the biosynthesis of ilicicolin H, a 4-hydroxy-2-pyridonealkaloid that has potent and broad antifungal activities by inhibiting the mitochondrial respiration chain (PubMed:34947016). The biosynthesis of ilicicolin H starts with formation of the tetramic acid by the hybrid PKS-NRPS synthetase iliA with the partnering trans-enoyl reductase iliB since iliA lacks a designated enoylreductase (ER) domain. The cytochrome P450 monooxygenase iliC then catalyzes the ring expansion of the tetramate to the acyclic 2-pyridone. The pericyclase iliD further converts the acyclic 2-pyridone into 8-epi-ilicicolin H. 8-epi-ilicicolin H might then spontaneously convert to ilicicolin H since ilicicolin H is produced in the absence of the epimerase iliE, in contrast to what was observed for the Talaromyces variabilis ilicolin H biosynthetic pathway (Probable) (PubMed:34947016).</text>
</comment>
<comment type="similarity">
    <text evidence="4">Belongs to the NADH:flavin oxidoreductase/NADH oxidase family.</text>
</comment>
<sequence>MAELHASLPITLRCGLTLPNRLVKASMSEGISAAGSLPDMKIRNIYQRWAKGGWGMVITGNVQVDDRYLGTANDLAVDSRASDDTIVASWSRWAKVCRQHGTPTLVQLNHPGRQCPIGAGTHGYLSKNVAPTSIGLHMGDGLIPKAVSAIAFGKPRELEIAEIRTITQQFARAARLAYRSGFAGVEIHAAHGYLIDEFLTERTNRRSDAYGGSTERRAKFLIDIISAVRSEVPSSFCVGVTINSVDSVFPEILVDRVRQLELVTSAGVDFIEISGGTFEDPLMFLGPPKPSSSANMEHSEAYFVDFAKVVASKFPDVPLLLTGGFRCRESIEKAVTNGACSMVGIARPAAVNPLLPKTVMFNHEVKDSDATLYSPKIEAPWLIRQMGITALSVHMDNVSSF</sequence>